<organismHost>
    <name type="scientific">Bos taurus</name>
    <name type="common">Bovine</name>
    <dbReference type="NCBI Taxonomy" id="9913"/>
</organismHost>
<comment type="function">
    <text evidence="2">Calcium-binding protein that interacts with rotavirus cell receptors once the initial attachment by VP4 has been achieved. Rotavirus attachment and entry into the host cell probably involves multiple sequential contacts between the outer capsid proteins VP4 and VP7, and the cell receptors. Following entry into the host cell, low intracellular or intravesicular Ca(2+) concentration probably causes the calcium-stabilized VP7 trimers to dissociate from the virion. This step is probably necessary for the membrane-disrupting entry step and the release of VP4, which is locked onto the virion by VP7.</text>
</comment>
<comment type="subunit">
    <text evidence="2">Homotrimer; disulfide-linked. 2 Ca(2+) ions bound at each subunit interface in the trimer hold the trimer together. Interacts with the intermediate capsid protein VP6. Interacts with the outer capsid protein VP5*.</text>
</comment>
<comment type="subcellular location">
    <subcellularLocation>
        <location evidence="2">Virion</location>
    </subcellularLocation>
    <subcellularLocation>
        <location evidence="2">Host endoplasmic reticulum lumen</location>
    </subcellularLocation>
    <text evidence="2">The outer layer contains 780 copies of VP7, grouped as 260 trimers. Immature double-layered particles assembled in the cytoplasm bud across the membrane of the endoplasmic reticulum, acquiring during this process a transient lipid membrane that is modified with the ER resident viral glycoproteins NSP4 and VP7; these enveloped particles also contain VP4. As the particles move towards the interior of the ER cisternae, the transient lipid membrane and the non-structural protein NSP4 are lost, while the virus surface proteins VP4 and VP7 rearrange to form the outermost virus protein layer, yielding mature infectious triple-layered particles.</text>
</comment>
<comment type="alternative products">
    <event type="alternative initiation"/>
    <isoform>
        <id>Q96643-1</id>
        <name>1</name>
        <sequence type="displayed"/>
    </isoform>
    <isoform>
        <id>Q96643-2</id>
        <name>2</name>
        <sequence type="described" ref="VSP_038587"/>
    </isoform>
</comment>
<comment type="PTM">
    <text evidence="2">N-glycosylated.</text>
</comment>
<comment type="PTM">
    <text evidence="2">The N-terminus is blocked possibly by pyroglutamic acid.</text>
</comment>
<comment type="miscellaneous">
    <text evidence="2">Some rotavirus strains are neuraminidase-sensitive and require sialic acid to attach to the cell surface. Some rotavirus strains are integrin-dependent. Some rotavirus strains depend on ganglioside for their entry into the host cell. Hsp70 also seems to be involved in the entry of some strains.</text>
</comment>
<comment type="miscellaneous">
    <text evidence="2">In group A rotaviruses, VP7 defines the G serotype.</text>
</comment>
<comment type="miscellaneous">
    <molecule>Isoform 2</molecule>
    <text evidence="3">Produced by alternative initiation at Met-30 of isoform 1.</text>
</comment>
<comment type="similarity">
    <text evidence="2">Belongs to the rotavirus VP7 family.</text>
</comment>
<proteinExistence type="evidence at transcript level"/>
<dbReference type="EMBL" id="U53924">
    <property type="protein sequence ID" value="AAB18953.1"/>
    <property type="molecule type" value="mRNA"/>
</dbReference>
<dbReference type="SMR" id="Q96643"/>
<dbReference type="GO" id="GO:0044166">
    <property type="term" value="C:host cell endoplasmic reticulum lumen"/>
    <property type="evidence" value="ECO:0007669"/>
    <property type="project" value="UniProtKB-SubCell"/>
</dbReference>
<dbReference type="GO" id="GO:0039621">
    <property type="term" value="C:T=13 icosahedral viral capsid"/>
    <property type="evidence" value="ECO:0007669"/>
    <property type="project" value="UniProtKB-UniRule"/>
</dbReference>
<dbReference type="GO" id="GO:0039624">
    <property type="term" value="C:viral outer capsid"/>
    <property type="evidence" value="ECO:0007669"/>
    <property type="project" value="UniProtKB-UniRule"/>
</dbReference>
<dbReference type="GO" id="GO:0046872">
    <property type="term" value="F:metal ion binding"/>
    <property type="evidence" value="ECO:0007669"/>
    <property type="project" value="UniProtKB-KW"/>
</dbReference>
<dbReference type="Gene3D" id="3.40.50.11130">
    <property type="entry name" value="Glycoprotein VP7, domain 1"/>
    <property type="match status" value="1"/>
</dbReference>
<dbReference type="Gene3D" id="2.60.120.800">
    <property type="entry name" value="Rotavirus outer-layer protein VP7, domain 2"/>
    <property type="match status" value="1"/>
</dbReference>
<dbReference type="HAMAP" id="MF_04130">
    <property type="entry name" value="Rota_VP7"/>
    <property type="match status" value="1"/>
</dbReference>
<dbReference type="HAMAP" id="MF_04131">
    <property type="entry name" value="Rota_VP7_A"/>
    <property type="match status" value="1"/>
</dbReference>
<dbReference type="InterPro" id="IPR001963">
    <property type="entry name" value="VP7"/>
</dbReference>
<dbReference type="InterPro" id="IPR042207">
    <property type="entry name" value="VP7_1"/>
</dbReference>
<dbReference type="InterPro" id="IPR042210">
    <property type="entry name" value="VP7_2"/>
</dbReference>
<dbReference type="Pfam" id="PF00434">
    <property type="entry name" value="VP7"/>
    <property type="match status" value="1"/>
</dbReference>
<evidence type="ECO:0000255" key="1"/>
<evidence type="ECO:0000255" key="2">
    <source>
        <dbReference type="HAMAP-Rule" id="MF_04131"/>
    </source>
</evidence>
<evidence type="ECO:0000305" key="3"/>
<keyword id="KW-0024">Alternative initiation</keyword>
<keyword id="KW-0106">Calcium</keyword>
<keyword id="KW-0167">Capsid protein</keyword>
<keyword id="KW-1015">Disulfide bond</keyword>
<keyword id="KW-0325">Glycoprotein</keyword>
<keyword id="KW-1038">Host endoplasmic reticulum</keyword>
<keyword id="KW-0945">Host-virus interaction</keyword>
<keyword id="KW-0479">Metal-binding</keyword>
<keyword id="KW-1152">Outer capsid protein</keyword>
<keyword id="KW-0732">Signal</keyword>
<keyword id="KW-1146">T=13 icosahedral capsid protein</keyword>
<keyword id="KW-0946">Virion</keyword>
<organism>
    <name type="scientific">Rotavirus A (isolate RVA/Cow/United States/VMRI/1988/G6P[5])</name>
    <name type="common">RV-A</name>
    <dbReference type="NCBI Taxonomy" id="10935"/>
    <lineage>
        <taxon>Viruses</taxon>
        <taxon>Riboviria</taxon>
        <taxon>Orthornavirae</taxon>
        <taxon>Duplornaviricota</taxon>
        <taxon>Resentoviricetes</taxon>
        <taxon>Reovirales</taxon>
        <taxon>Sedoreoviridae</taxon>
        <taxon>Rotavirus</taxon>
        <taxon>Rotavirus A</taxon>
    </lineage>
</organism>
<reference key="1">
    <citation type="journal article" date="1996" name="Vet. Microbiol.">
        <title>The VP4 and VP7 of bovine rotavirus VMRI are antigenically and genetically closely related to P-type 5, G-type 6 strains.</title>
        <authorList>
            <person name="Mummidi S."/>
            <person name="Brooks M.A."/>
            <person name="Paul P.S."/>
            <person name="Lyoo Y.S."/>
            <person name="Zaberezhny A.D."/>
        </authorList>
    </citation>
    <scope>NUCLEOTIDE SEQUENCE [MRNA]</scope>
</reference>
<feature type="signal peptide" evidence="2">
    <location>
        <begin position="1"/>
        <end position="50"/>
    </location>
</feature>
<feature type="chain" id="PRO_0000369098" description="Outer capsid glycoprotein VP7" evidence="2">
    <location>
        <begin position="51"/>
        <end position="326"/>
    </location>
</feature>
<feature type="region of interest" description="CNP motif; interaction with ITGAV/ITGB3" evidence="2">
    <location>
        <begin position="165"/>
        <end position="167"/>
    </location>
</feature>
<feature type="region of interest" description="GPR motif; interaction with ITGAX/ITGB2" evidence="2">
    <location>
        <begin position="253"/>
        <end position="255"/>
    </location>
</feature>
<feature type="binding site" evidence="2">
    <location>
        <position position="95"/>
    </location>
    <ligand>
        <name>Ca(2+)</name>
        <dbReference type="ChEBI" id="CHEBI:29108"/>
        <label>1</label>
    </ligand>
</feature>
<feature type="binding site" evidence="2">
    <location>
        <position position="177"/>
    </location>
    <ligand>
        <name>Ca(2+)</name>
        <dbReference type="ChEBI" id="CHEBI:29108"/>
        <label>2</label>
    </ligand>
</feature>
<feature type="binding site" evidence="2">
    <location>
        <position position="206"/>
    </location>
    <ligand>
        <name>Ca(2+)</name>
        <dbReference type="ChEBI" id="CHEBI:29108"/>
        <label>1</label>
    </ligand>
</feature>
<feature type="binding site" evidence="2">
    <location>
        <position position="214"/>
    </location>
    <ligand>
        <name>Ca(2+)</name>
        <dbReference type="ChEBI" id="CHEBI:29108"/>
        <label>1</label>
    </ligand>
</feature>
<feature type="binding site" evidence="2">
    <location>
        <position position="216"/>
    </location>
    <ligand>
        <name>Ca(2+)</name>
        <dbReference type="ChEBI" id="CHEBI:29108"/>
        <label>1</label>
    </ligand>
</feature>
<feature type="binding site" evidence="2">
    <location>
        <position position="228"/>
    </location>
    <ligand>
        <name>Ca(2+)</name>
        <dbReference type="ChEBI" id="CHEBI:29108"/>
        <label>2</label>
    </ligand>
</feature>
<feature type="binding site" evidence="2">
    <location>
        <position position="229"/>
    </location>
    <ligand>
        <name>Ca(2+)</name>
        <dbReference type="ChEBI" id="CHEBI:29108"/>
        <label>2</label>
    </ligand>
</feature>
<feature type="binding site" evidence="2">
    <location>
        <position position="231"/>
    </location>
    <ligand>
        <name>Ca(2+)</name>
        <dbReference type="ChEBI" id="CHEBI:29108"/>
        <label>2</label>
    </ligand>
</feature>
<feature type="binding site" evidence="2">
    <location>
        <position position="301"/>
    </location>
    <ligand>
        <name>Ca(2+)</name>
        <dbReference type="ChEBI" id="CHEBI:29108"/>
        <label>2</label>
    </ligand>
</feature>
<feature type="glycosylation site" description="N-linked (GlcNAc...) asparagine; by host" evidence="1">
    <location>
        <position position="69"/>
    </location>
</feature>
<feature type="glycosylation site" description="N-linked (GlcNAc...) asparagine; by host" evidence="1">
    <location>
        <position position="238"/>
    </location>
</feature>
<feature type="glycosylation site" description="N-linked (GlcNAc...) asparagine; by host" evidence="1">
    <location>
        <position position="318"/>
    </location>
</feature>
<feature type="disulfide bond" evidence="2">
    <location>
        <begin position="82"/>
        <end position="135"/>
    </location>
</feature>
<feature type="disulfide bond" evidence="2">
    <location>
        <begin position="165"/>
        <end position="249"/>
    </location>
</feature>
<feature type="disulfide bond" evidence="2">
    <location>
        <begin position="191"/>
        <end position="244"/>
    </location>
</feature>
<feature type="disulfide bond" evidence="2">
    <location>
        <begin position="196"/>
        <end position="207"/>
    </location>
</feature>
<feature type="splice variant" id="VSP_038587" description="In isoform 2." evidence="3">
    <location>
        <begin position="1"/>
        <end position="29"/>
    </location>
</feature>
<accession>Q96643</accession>
<sequence length="326" mass="37209">MYGIEYTTILISLTSITLLNYILKSITRMMDYIIYRFLLIAVILATMINAQNYGVNLPITGSMDTAYANSTQNEPFWTSTLCLYYPVEASNEMADTEWKDTLSQLFLTKGWPTGSVYFKEYTDIAAFSVEPQLYCDYNLVLMKYDSTQELDMSELADLILNEWLCNPMDITLYYYQQTDEANKWISMGSSCTVQVCPLNTQTLGIGCLITNPDTFETVATPEKLVITDVVDGVNHKLNVTTATCTIRNCEKLGPRENVAVIQVGGANILDITADPTTTPQTERMMRINWKKWWQVFYTVVDYVNQIIQTMSKRSRSLNSSAFYYRV</sequence>
<name>VP7_ROTBV</name>
<protein>
    <recommendedName>
        <fullName evidence="2">Outer capsid glycoprotein VP7</fullName>
    </recommendedName>
</protein>